<gene>
    <name evidence="1" type="primary">rsmH</name>
    <name type="synonym">mraW</name>
    <name type="ordered locus">mhp406</name>
</gene>
<protein>
    <recommendedName>
        <fullName evidence="1">Ribosomal RNA small subunit methyltransferase H</fullName>
        <ecNumber evidence="1">2.1.1.199</ecNumber>
    </recommendedName>
    <alternativeName>
        <fullName evidence="1">16S rRNA m(4)C1402 methyltransferase</fullName>
    </alternativeName>
    <alternativeName>
        <fullName evidence="1">rRNA (cytosine-N(4)-)-methyltransferase RsmH</fullName>
    </alternativeName>
</protein>
<feature type="chain" id="PRO_0000108659" description="Ribosomal RNA small subunit methyltransferase H">
    <location>
        <begin position="1"/>
        <end position="296"/>
    </location>
</feature>
<feature type="binding site" evidence="1">
    <location>
        <begin position="30"/>
        <end position="32"/>
    </location>
    <ligand>
        <name>S-adenosyl-L-methionine</name>
        <dbReference type="ChEBI" id="CHEBI:59789"/>
    </ligand>
</feature>
<feature type="binding site" evidence="1">
    <location>
        <position position="49"/>
    </location>
    <ligand>
        <name>S-adenosyl-L-methionine</name>
        <dbReference type="ChEBI" id="CHEBI:59789"/>
    </ligand>
</feature>
<feature type="binding site" evidence="1">
    <location>
        <position position="76"/>
    </location>
    <ligand>
        <name>S-adenosyl-L-methionine</name>
        <dbReference type="ChEBI" id="CHEBI:59789"/>
    </ligand>
</feature>
<feature type="binding site" evidence="1">
    <location>
        <position position="97"/>
    </location>
    <ligand>
        <name>S-adenosyl-L-methionine</name>
        <dbReference type="ChEBI" id="CHEBI:59789"/>
    </ligand>
</feature>
<feature type="binding site" evidence="1">
    <location>
        <position position="104"/>
    </location>
    <ligand>
        <name>S-adenosyl-L-methionine</name>
        <dbReference type="ChEBI" id="CHEBI:59789"/>
    </ligand>
</feature>
<organism>
    <name type="scientific">Mesomycoplasma hyopneumoniae (strain 232)</name>
    <name type="common">Mycoplasma hyopneumoniae</name>
    <dbReference type="NCBI Taxonomy" id="295358"/>
    <lineage>
        <taxon>Bacteria</taxon>
        <taxon>Bacillati</taxon>
        <taxon>Mycoplasmatota</taxon>
        <taxon>Mycoplasmoidales</taxon>
        <taxon>Metamycoplasmataceae</taxon>
        <taxon>Mesomycoplasma</taxon>
    </lineage>
</organism>
<reference key="1">
    <citation type="journal article" date="2004" name="J. Bacteriol.">
        <title>The genome sequence of Mycoplasma hyopneumoniae strain 232, the agent of swine mycoplasmosis.</title>
        <authorList>
            <person name="Minion F.C."/>
            <person name="Lefkowitz E.J."/>
            <person name="Madsen M.L."/>
            <person name="Cleary B.J."/>
            <person name="Swartzell S.M."/>
            <person name="Mahairas G.G."/>
        </authorList>
    </citation>
    <scope>NUCLEOTIDE SEQUENCE [LARGE SCALE GENOMIC DNA]</scope>
    <source>
        <strain>232</strain>
    </source>
</reference>
<name>RSMH_MESH2</name>
<proteinExistence type="inferred from homology"/>
<keyword id="KW-0963">Cytoplasm</keyword>
<keyword id="KW-0489">Methyltransferase</keyword>
<keyword id="KW-0698">rRNA processing</keyword>
<keyword id="KW-0949">S-adenosyl-L-methionine</keyword>
<keyword id="KW-0808">Transferase</keyword>
<accession>Q600P9</accession>
<sequence>MHVPVLLEELILALEINPKGFYVDLTLGRGGHSLAILEKISNGKLVVFDKDQDALDQTRPKLLALKQNIEIIWSDFSRFDFYLENLGIQFVDGFIIDLGVSSPQIDDPARGFSYSKDGNLDMRMDKSQKLSAFIVLNEYPYEKLVEIFFKYGQIPYAREIARAIINSRPLKTTFELVNLVKKVIPALVLVKKNFIKNVFQAVRIEVNNELDSLQKLLEKLPKFLKQGSKVAIITFHSLEDRIVKKAFLDLIRKDKLEFFQKGLPKFSMKVFRPKANELKSNPRAKSAKLRLLLQNR</sequence>
<dbReference type="EC" id="2.1.1.199" evidence="1"/>
<dbReference type="EMBL" id="AE017332">
    <property type="protein sequence ID" value="AAV27560.1"/>
    <property type="molecule type" value="Genomic_DNA"/>
</dbReference>
<dbReference type="RefSeq" id="WP_011206240.1">
    <property type="nucleotide sequence ID" value="NC_006360.1"/>
</dbReference>
<dbReference type="SMR" id="Q600P9"/>
<dbReference type="KEGG" id="mhy:mhp406"/>
<dbReference type="eggNOG" id="COG0275">
    <property type="taxonomic scope" value="Bacteria"/>
</dbReference>
<dbReference type="HOGENOM" id="CLU_038422_2_0_14"/>
<dbReference type="PhylomeDB" id="Q600P9"/>
<dbReference type="Proteomes" id="UP000006822">
    <property type="component" value="Chromosome"/>
</dbReference>
<dbReference type="GO" id="GO:0005737">
    <property type="term" value="C:cytoplasm"/>
    <property type="evidence" value="ECO:0007669"/>
    <property type="project" value="UniProtKB-SubCell"/>
</dbReference>
<dbReference type="GO" id="GO:0071424">
    <property type="term" value="F:rRNA (cytosine-N4-)-methyltransferase activity"/>
    <property type="evidence" value="ECO:0007669"/>
    <property type="project" value="UniProtKB-UniRule"/>
</dbReference>
<dbReference type="GO" id="GO:0070475">
    <property type="term" value="P:rRNA base methylation"/>
    <property type="evidence" value="ECO:0007669"/>
    <property type="project" value="UniProtKB-UniRule"/>
</dbReference>
<dbReference type="Gene3D" id="1.10.150.170">
    <property type="entry name" value="Putative methyltransferase TM0872, insert domain"/>
    <property type="match status" value="1"/>
</dbReference>
<dbReference type="Gene3D" id="3.40.50.150">
    <property type="entry name" value="Vaccinia Virus protein VP39"/>
    <property type="match status" value="1"/>
</dbReference>
<dbReference type="HAMAP" id="MF_01007">
    <property type="entry name" value="16SrRNA_methyltr_H"/>
    <property type="match status" value="1"/>
</dbReference>
<dbReference type="InterPro" id="IPR002903">
    <property type="entry name" value="RsmH"/>
</dbReference>
<dbReference type="InterPro" id="IPR023397">
    <property type="entry name" value="SAM-dep_MeTrfase_MraW_recog"/>
</dbReference>
<dbReference type="InterPro" id="IPR029063">
    <property type="entry name" value="SAM-dependent_MTases_sf"/>
</dbReference>
<dbReference type="NCBIfam" id="TIGR00006">
    <property type="entry name" value="16S rRNA (cytosine(1402)-N(4))-methyltransferase RsmH"/>
    <property type="match status" value="1"/>
</dbReference>
<dbReference type="PANTHER" id="PTHR11265:SF0">
    <property type="entry name" value="12S RRNA N4-METHYLCYTIDINE METHYLTRANSFERASE"/>
    <property type="match status" value="1"/>
</dbReference>
<dbReference type="PANTHER" id="PTHR11265">
    <property type="entry name" value="S-ADENOSYL-METHYLTRANSFERASE MRAW"/>
    <property type="match status" value="1"/>
</dbReference>
<dbReference type="Pfam" id="PF01795">
    <property type="entry name" value="Methyltransf_5"/>
    <property type="match status" value="1"/>
</dbReference>
<dbReference type="PIRSF" id="PIRSF004486">
    <property type="entry name" value="MraW"/>
    <property type="match status" value="1"/>
</dbReference>
<dbReference type="SUPFAM" id="SSF81799">
    <property type="entry name" value="Putative methyltransferase TM0872, insert domain"/>
    <property type="match status" value="1"/>
</dbReference>
<dbReference type="SUPFAM" id="SSF53335">
    <property type="entry name" value="S-adenosyl-L-methionine-dependent methyltransferases"/>
    <property type="match status" value="1"/>
</dbReference>
<comment type="function">
    <text evidence="1">Specifically methylates the N4 position of cytidine in position 1402 (C1402) of 16S rRNA.</text>
</comment>
<comment type="catalytic activity">
    <reaction evidence="1">
        <text>cytidine(1402) in 16S rRNA + S-adenosyl-L-methionine = N(4)-methylcytidine(1402) in 16S rRNA + S-adenosyl-L-homocysteine + H(+)</text>
        <dbReference type="Rhea" id="RHEA:42928"/>
        <dbReference type="Rhea" id="RHEA-COMP:10286"/>
        <dbReference type="Rhea" id="RHEA-COMP:10287"/>
        <dbReference type="ChEBI" id="CHEBI:15378"/>
        <dbReference type="ChEBI" id="CHEBI:57856"/>
        <dbReference type="ChEBI" id="CHEBI:59789"/>
        <dbReference type="ChEBI" id="CHEBI:74506"/>
        <dbReference type="ChEBI" id="CHEBI:82748"/>
        <dbReference type="EC" id="2.1.1.199"/>
    </reaction>
</comment>
<comment type="subcellular location">
    <subcellularLocation>
        <location evidence="1">Cytoplasm</location>
    </subcellularLocation>
</comment>
<comment type="similarity">
    <text evidence="1">Belongs to the methyltransferase superfamily. RsmH family.</text>
</comment>
<evidence type="ECO:0000255" key="1">
    <source>
        <dbReference type="HAMAP-Rule" id="MF_01007"/>
    </source>
</evidence>